<evidence type="ECO:0000250" key="1">
    <source>
        <dbReference type="UniProtKB" id="Q0VC21"/>
    </source>
</evidence>
<evidence type="ECO:0000256" key="2">
    <source>
        <dbReference type="SAM" id="MobiDB-lite"/>
    </source>
</evidence>
<evidence type="ECO:0000269" key="3">
    <source>
    </source>
</evidence>
<evidence type="ECO:0000269" key="4">
    <source>
    </source>
</evidence>
<evidence type="ECO:0000269" key="5">
    <source>
    </source>
</evidence>
<evidence type="ECO:0000269" key="6">
    <source>
    </source>
</evidence>
<evidence type="ECO:0000303" key="7">
    <source>
    </source>
</evidence>
<evidence type="ECO:0000305" key="8"/>
<evidence type="ECO:0007744" key="9">
    <source>
        <dbReference type="PDB" id="3J7Y"/>
    </source>
</evidence>
<evidence type="ECO:0007744" key="10">
    <source>
        <dbReference type="PDB" id="3J9M"/>
    </source>
</evidence>
<evidence type="ECO:0007744" key="11">
    <source>
        <dbReference type="PDB" id="5OOL"/>
    </source>
</evidence>
<evidence type="ECO:0007744" key="12">
    <source>
        <dbReference type="PDB" id="5OOM"/>
    </source>
</evidence>
<evidence type="ECO:0007744" key="13">
    <source>
        <dbReference type="PDB" id="7QH6"/>
    </source>
</evidence>
<evidence type="ECO:0007744" key="14">
    <source>
        <dbReference type="PDB" id="7QH7"/>
    </source>
</evidence>
<evidence type="ECO:0007829" key="15">
    <source>
        <dbReference type="PDB" id="3J7Y"/>
    </source>
</evidence>
<evidence type="ECO:0007829" key="16">
    <source>
        <dbReference type="PDB" id="7OF0"/>
    </source>
</evidence>
<evidence type="ECO:0007829" key="17">
    <source>
        <dbReference type="PDB" id="7OI9"/>
    </source>
</evidence>
<evidence type="ECO:0007829" key="18">
    <source>
        <dbReference type="PDB" id="7QH6"/>
    </source>
</evidence>
<evidence type="ECO:0007829" key="19">
    <source>
        <dbReference type="PDB" id="7QH7"/>
    </source>
</evidence>
<evidence type="ECO:0007829" key="20">
    <source>
        <dbReference type="PDB" id="8QU1"/>
    </source>
</evidence>
<keyword id="KW-0002">3D-structure</keyword>
<keyword id="KW-0496">Mitochondrion</keyword>
<keyword id="KW-1267">Proteomics identification</keyword>
<keyword id="KW-1185">Reference proteome</keyword>
<keyword id="KW-0687">Ribonucleoprotein</keyword>
<keyword id="KW-0689">Ribosomal protein</keyword>
<keyword id="KW-0809">Transit peptide</keyword>
<comment type="subunit">
    <text evidence="3 4 5 6">Component of the mitochondrial large ribosomal subunit (mt-LSU) (PubMed:25278503, PubMed:25838379, PubMed:28892042, PubMed:35177605). Mature mammalian 55S mitochondrial ribosomes consist of a small (28S) and a large (39S) subunit. The 28S small subunit contains a 12S ribosomal RNA (12S mt-rRNA) and 30 different proteins. The 39S large subunit contains a 16S rRNA (16S mt-rRNA), a copy of mitochondrial valine transfer RNA (mt-tRNA(Val)), which plays an integral structural role, and 52 different proteins.</text>
</comment>
<comment type="interaction">
    <interactant intactId="EBI-2371967">
        <id>Q9P015</id>
    </interactant>
    <interactant intactId="EBI-748961">
        <id>O95273</id>
        <label>CCNDBP1</label>
    </interactant>
    <organismsDiffer>false</organismsDiffer>
    <experiments>7</experiments>
</comment>
<comment type="interaction">
    <interactant intactId="EBI-2371967">
        <id>Q9P015</id>
    </interactant>
    <interactant intactId="EBI-747225">
        <id>Q59EK9</id>
        <label>RUNDC3A</label>
    </interactant>
    <organismsDiffer>false</organismsDiffer>
    <experiments>3</experiments>
</comment>
<comment type="interaction">
    <interactant intactId="EBI-2371967">
        <id>Q9P015</id>
    </interactant>
    <interactant intactId="EBI-607085">
        <id>P09012</id>
        <label>SNRPA</label>
    </interactant>
    <organismsDiffer>false</organismsDiffer>
    <experiments>3</experiments>
</comment>
<comment type="interaction">
    <interactant intactId="EBI-2371967">
        <id>Q9P015</id>
    </interactant>
    <interactant intactId="EBI-11097439">
        <id>P26368-2</id>
        <label>U2AF2</label>
    </interactant>
    <organismsDiffer>false</organismsDiffer>
    <experiments>3</experiments>
</comment>
<comment type="subcellular location">
    <subcellularLocation>
        <location evidence="3 4 5">Mitochondrion</location>
    </subcellularLocation>
</comment>
<comment type="similarity">
    <text evidence="8">Belongs to the universal ribosomal protein uL15 family.</text>
</comment>
<gene>
    <name type="primary">MRPL15</name>
    <name type="ORF">HSPC145</name>
</gene>
<sequence>MAGPLQGGGARALDLLRGLPRVSLANLKPNPGSKKPERRPRGRRRGRKCGRGHKGERQRGTRPRLGFEGGQTPFYIRIPKYGFNEGHSFRRQYKPLSLNRLQYLIDLGRVDPSQPIDLTQLVNGRGVTIQPLKRDYGVQLVEEGADTFTAKVNIEVQLASELAIAAIEKNGGVVTTAFYDPRSLDIVCKPVPFFLRGQPIPKRMLPPEELVPYYTDAKNRGYLADPAKFPEARLELARKYGYILPDITKDELFKMLCTRKDPRQIFFGLAPGWVVNMADKKILKPTDENLLKYYTS</sequence>
<name>RM15_HUMAN</name>
<protein>
    <recommendedName>
        <fullName evidence="7">Large ribosomal subunit protein uL15m</fullName>
    </recommendedName>
    <alternativeName>
        <fullName>39S ribosomal protein L15, mitochondrial</fullName>
        <shortName>L15mt</shortName>
        <shortName>MRP-L15</shortName>
    </alternativeName>
</protein>
<reference key="1">
    <citation type="journal article" date="2000" name="Genome Res.">
        <title>Cloning and functional analysis of cDNAs with open reading frames for 300 previously undefined genes expressed in CD34+ hematopoietic stem/progenitor cells.</title>
        <authorList>
            <person name="Zhang Q.-H."/>
            <person name="Ye M."/>
            <person name="Wu X.-Y."/>
            <person name="Ren S.-X."/>
            <person name="Zhao M."/>
            <person name="Zhao C.-J."/>
            <person name="Fu G."/>
            <person name="Shen Y."/>
            <person name="Fan H.-Y."/>
            <person name="Lu G."/>
            <person name="Zhong M."/>
            <person name="Xu X.-R."/>
            <person name="Han Z.-G."/>
            <person name="Zhang J.-W."/>
            <person name="Tao J."/>
            <person name="Huang Q.-H."/>
            <person name="Zhou J."/>
            <person name="Hu G.-X."/>
            <person name="Gu J."/>
            <person name="Chen S.-J."/>
            <person name="Chen Z."/>
        </authorList>
    </citation>
    <scope>NUCLEOTIDE SEQUENCE [LARGE SCALE MRNA]</scope>
    <source>
        <tissue>Blood</tissue>
    </source>
</reference>
<reference key="2">
    <citation type="journal article" date="2001" name="Genome Res.">
        <title>Towards a catalog of human genes and proteins: sequencing and analysis of 500 novel complete protein coding human cDNAs.</title>
        <authorList>
            <person name="Wiemann S."/>
            <person name="Weil B."/>
            <person name="Wellenreuther R."/>
            <person name="Gassenhuber J."/>
            <person name="Glassl S."/>
            <person name="Ansorge W."/>
            <person name="Boecher M."/>
            <person name="Bloecker H."/>
            <person name="Bauersachs S."/>
            <person name="Blum H."/>
            <person name="Lauber J."/>
            <person name="Duesterhoeft A."/>
            <person name="Beyer A."/>
            <person name="Koehrer K."/>
            <person name="Strack N."/>
            <person name="Mewes H.-W."/>
            <person name="Ottenwaelder B."/>
            <person name="Obermaier B."/>
            <person name="Tampe J."/>
            <person name="Heubner D."/>
            <person name="Wambutt R."/>
            <person name="Korn B."/>
            <person name="Klein M."/>
            <person name="Poustka A."/>
        </authorList>
    </citation>
    <scope>NUCLEOTIDE SEQUENCE [LARGE SCALE MRNA]</scope>
    <source>
        <tissue>Fetal brain</tissue>
    </source>
</reference>
<reference key="3">
    <citation type="submission" date="2004-06" db="EMBL/GenBank/DDBJ databases">
        <title>Cloning of human full open reading frames in Gateway(TM) system entry vector (pDONR201).</title>
        <authorList>
            <person name="Ebert L."/>
            <person name="Schick M."/>
            <person name="Neubert P."/>
            <person name="Schatten R."/>
            <person name="Henze S."/>
            <person name="Korn B."/>
        </authorList>
    </citation>
    <scope>NUCLEOTIDE SEQUENCE [LARGE SCALE MRNA]</scope>
</reference>
<reference key="4">
    <citation type="journal article" date="2004" name="Genome Res.">
        <title>The status, quality, and expansion of the NIH full-length cDNA project: the Mammalian Gene Collection (MGC).</title>
        <authorList>
            <consortium name="The MGC Project Team"/>
        </authorList>
    </citation>
    <scope>NUCLEOTIDE SEQUENCE [LARGE SCALE MRNA]</scope>
    <source>
        <tissue>Cervix</tissue>
    </source>
</reference>
<reference key="5">
    <citation type="journal article" date="2001" name="Genomics">
        <title>The human mitochondrial ribosomal protein genes: mapping of 54 genes to the chromosomes and implications for human disorders.</title>
        <authorList>
            <person name="Kenmochi N."/>
            <person name="Suzuki T."/>
            <person name="Uechi T."/>
            <person name="Magoori M."/>
            <person name="Kuniba M."/>
            <person name="Higa S."/>
            <person name="Watanabe K."/>
            <person name="Tanaka T."/>
        </authorList>
    </citation>
    <scope>NUCLEOTIDE SEQUENCE [GENOMIC DNA] OF 259-296</scope>
</reference>
<reference key="6">
    <citation type="journal article" date="2011" name="BMC Syst. Biol.">
        <title>Initial characterization of the human central proteome.</title>
        <authorList>
            <person name="Burkard T.R."/>
            <person name="Planyavsky M."/>
            <person name="Kaupe I."/>
            <person name="Breitwieser F.P."/>
            <person name="Buerckstuemmer T."/>
            <person name="Bennett K.L."/>
            <person name="Superti-Furga G."/>
            <person name="Colinge J."/>
        </authorList>
    </citation>
    <scope>IDENTIFICATION BY MASS SPECTROMETRY [LARGE SCALE ANALYSIS]</scope>
</reference>
<reference key="7">
    <citation type="journal article" date="2012" name="Proc. Natl. Acad. Sci. U.S.A.">
        <title>N-terminal acetylome analyses and functional insights of the N-terminal acetyltransferase NatB.</title>
        <authorList>
            <person name="Van Damme P."/>
            <person name="Lasa M."/>
            <person name="Polevoda B."/>
            <person name="Gazquez C."/>
            <person name="Elosegui-Artola A."/>
            <person name="Kim D.S."/>
            <person name="De Juan-Pardo E."/>
            <person name="Demeyer K."/>
            <person name="Hole K."/>
            <person name="Larrea E."/>
            <person name="Timmerman E."/>
            <person name="Prieto J."/>
            <person name="Arnesen T."/>
            <person name="Sherman F."/>
            <person name="Gevaert K."/>
            <person name="Aldabe R."/>
        </authorList>
    </citation>
    <scope>IDENTIFICATION BY MASS SPECTROMETRY [LARGE SCALE ANALYSIS]</scope>
</reference>
<reference key="8">
    <citation type="journal article" date="2015" name="Proteomics">
        <title>N-terminome analysis of the human mitochondrial proteome.</title>
        <authorList>
            <person name="Vaca Jacome A.S."/>
            <person name="Rabilloud T."/>
            <person name="Schaeffer-Reiss C."/>
            <person name="Rompais M."/>
            <person name="Ayoub D."/>
            <person name="Lane L."/>
            <person name="Bairoch A."/>
            <person name="Van Dorsselaer A."/>
            <person name="Carapito C."/>
        </authorList>
    </citation>
    <scope>IDENTIFICATION BY MASS SPECTROMETRY [LARGE SCALE ANALYSIS]</scope>
</reference>
<reference evidence="9" key="9">
    <citation type="journal article" date="2014" name="Science">
        <title>Structure of the large ribosomal subunit from human mitochondria.</title>
        <authorList>
            <person name="Brown A."/>
            <person name="Amunts A."/>
            <person name="Bai X.C."/>
            <person name="Sugimoto Y."/>
            <person name="Edwards P.C."/>
            <person name="Murshudov G."/>
            <person name="Scheres S.H."/>
            <person name="Ramakrishnan V."/>
        </authorList>
    </citation>
    <scope>STRUCTURE BY ELECTRON MICROSCOPY (3.40 ANGSTROMS)</scope>
    <scope>SUBCELLULAR LOCATION</scope>
    <scope>SUBUNIT</scope>
</reference>
<reference evidence="10" key="10">
    <citation type="journal article" date="2015" name="Science">
        <title>Ribosome. The structure of the human mitochondrial ribosome.</title>
        <authorList>
            <person name="Amunts A."/>
            <person name="Brown A."/>
            <person name="Toots J."/>
            <person name="Scheres S.H."/>
            <person name="Ramakrishnan V."/>
        </authorList>
    </citation>
    <scope>STRUCTURE BY ELECTRON MICROSCOPY (3.50 ANGSTROMS)</scope>
    <scope>SUBCELLULAR LOCATION</scope>
    <scope>SUBUNIT</scope>
</reference>
<reference evidence="11 12" key="11">
    <citation type="journal article" date="2017" name="Nat. Struct. Mol. Biol.">
        <title>Structures of the human mitochondrial ribosome in native states of assembly.</title>
        <authorList>
            <person name="Brown A."/>
            <person name="Rathore S."/>
            <person name="Kimanius D."/>
            <person name="Aibara S."/>
            <person name="Bai X.C."/>
            <person name="Rorbach J."/>
            <person name="Amunts A."/>
            <person name="Ramakrishnan V."/>
        </authorList>
    </citation>
    <scope>STRUCTURE BY ELECTRON MICROSCOPY (3.03 ANGSTROMS)</scope>
    <scope>SUBCELLULAR LOCATION</scope>
    <scope>SUBUNIT</scope>
</reference>
<reference evidence="13 14" key="12">
    <citation type="journal article" date="2022" name="Nat. Commun.">
        <title>A late-stage assembly checkpoint of the human mitochondrial ribosome large subunit.</title>
        <authorList>
            <person name="Rebelo-Guiomar P."/>
            <person name="Pellegrino S."/>
            <person name="Dent K.C."/>
            <person name="Sas-Chen A."/>
            <person name="Miller-Fleming L."/>
            <person name="Garone C."/>
            <person name="Van Haute L."/>
            <person name="Rogan J.F."/>
            <person name="Dinan A."/>
            <person name="Firth A.E."/>
            <person name="Andrews B."/>
            <person name="Whitworth A.J."/>
            <person name="Schwartz S."/>
            <person name="Warren A.J."/>
            <person name="Minczuk M."/>
        </authorList>
    </citation>
    <scope>STRUCTURE BY ELECTRON MICROSCOPY (2.9 ANGSTROMS) IN COMPLEX WITH MTLSU</scope>
    <scope>SUBUNIT</scope>
</reference>
<feature type="transit peptide" description="Mitochondrion" evidence="1">
    <location>
        <begin position="1"/>
        <end position="21"/>
    </location>
</feature>
<feature type="chain" id="PRO_0000257838" description="Large ribosomal subunit protein uL15m">
    <location>
        <begin position="22"/>
        <end position="296"/>
    </location>
</feature>
<feature type="region of interest" description="Disordered" evidence="2">
    <location>
        <begin position="22"/>
        <end position="66"/>
    </location>
</feature>
<feature type="compositionally biased region" description="Basic residues" evidence="2">
    <location>
        <begin position="36"/>
        <end position="52"/>
    </location>
</feature>
<feature type="sequence conflict" description="In Ref. 2; CAB66600 and 3; CAG38562." evidence="8" ref="2 3">
    <original>L</original>
    <variation>M</variation>
    <location>
        <position position="96"/>
    </location>
</feature>
<feature type="sequence conflict" description="In Ref. 2; CAB66600 and 3; CAG38562." evidence="8" ref="2 3">
    <original>G</original>
    <variation>D</variation>
    <location>
        <position position="137"/>
    </location>
</feature>
<feature type="helix" evidence="16">
    <location>
        <begin position="11"/>
        <end position="18"/>
    </location>
</feature>
<feature type="turn" evidence="19">
    <location>
        <begin position="24"/>
        <end position="26"/>
    </location>
</feature>
<feature type="turn" evidence="19">
    <location>
        <begin position="31"/>
        <end position="33"/>
    </location>
</feature>
<feature type="turn" evidence="16">
    <location>
        <begin position="43"/>
        <end position="45"/>
    </location>
</feature>
<feature type="turn" evidence="16">
    <location>
        <begin position="47"/>
        <end position="50"/>
    </location>
</feature>
<feature type="strand" evidence="16">
    <location>
        <begin position="53"/>
        <end position="55"/>
    </location>
</feature>
<feature type="helix" evidence="16">
    <location>
        <begin position="56"/>
        <end position="59"/>
    </location>
</feature>
<feature type="strand" evidence="17">
    <location>
        <begin position="69"/>
        <end position="71"/>
    </location>
</feature>
<feature type="helix" evidence="16">
    <location>
        <begin position="74"/>
        <end position="77"/>
    </location>
</feature>
<feature type="turn" evidence="20">
    <location>
        <begin position="83"/>
        <end position="86"/>
    </location>
</feature>
<feature type="helix" evidence="16">
    <location>
        <begin position="87"/>
        <end position="89"/>
    </location>
</feature>
<feature type="strand" evidence="16">
    <location>
        <begin position="92"/>
        <end position="97"/>
    </location>
</feature>
<feature type="helix" evidence="16">
    <location>
        <begin position="98"/>
        <end position="106"/>
    </location>
</feature>
<feature type="strand" evidence="15">
    <location>
        <begin position="108"/>
        <end position="110"/>
    </location>
</feature>
<feature type="strand" evidence="18">
    <location>
        <begin position="112"/>
        <end position="114"/>
    </location>
</feature>
<feature type="helix" evidence="16">
    <location>
        <begin position="118"/>
        <end position="123"/>
    </location>
</feature>
<feature type="helix" evidence="16">
    <location>
        <begin position="131"/>
        <end position="133"/>
    </location>
</feature>
<feature type="strand" evidence="16">
    <location>
        <begin position="135"/>
        <end position="141"/>
    </location>
</feature>
<feature type="helix" evidence="16">
    <location>
        <begin position="145"/>
        <end position="147"/>
    </location>
</feature>
<feature type="strand" evidence="16">
    <location>
        <begin position="153"/>
        <end position="159"/>
    </location>
</feature>
<feature type="helix" evidence="16">
    <location>
        <begin position="161"/>
        <end position="169"/>
    </location>
</feature>
<feature type="strand" evidence="16">
    <location>
        <begin position="173"/>
        <end position="176"/>
    </location>
</feature>
<feature type="helix" evidence="16">
    <location>
        <begin position="181"/>
        <end position="188"/>
    </location>
</feature>
<feature type="helix" evidence="16">
    <location>
        <begin position="190"/>
        <end position="195"/>
    </location>
</feature>
<feature type="turn" evidence="16">
    <location>
        <begin position="208"/>
        <end position="210"/>
    </location>
</feature>
<feature type="helix" evidence="16">
    <location>
        <begin position="211"/>
        <end position="215"/>
    </location>
</feature>
<feature type="turn" evidence="16">
    <location>
        <begin position="217"/>
        <end position="220"/>
    </location>
</feature>
<feature type="strand" evidence="19">
    <location>
        <begin position="221"/>
        <end position="224"/>
    </location>
</feature>
<feature type="helix" evidence="16">
    <location>
        <begin position="226"/>
        <end position="228"/>
    </location>
</feature>
<feature type="helix" evidence="16">
    <location>
        <begin position="229"/>
        <end position="240"/>
    </location>
</feature>
<feature type="helix" evidence="16">
    <location>
        <begin position="247"/>
        <end position="249"/>
    </location>
</feature>
<feature type="helix" evidence="16">
    <location>
        <begin position="253"/>
        <end position="257"/>
    </location>
</feature>
<feature type="strand" evidence="16">
    <location>
        <begin position="265"/>
        <end position="268"/>
    </location>
</feature>
<feature type="strand" evidence="16">
    <location>
        <begin position="274"/>
        <end position="276"/>
    </location>
</feature>
<feature type="turn" evidence="16">
    <location>
        <begin position="277"/>
        <end position="280"/>
    </location>
</feature>
<feature type="strand" evidence="16">
    <location>
        <begin position="281"/>
        <end position="285"/>
    </location>
</feature>
<feature type="helix" evidence="16">
    <location>
        <begin position="288"/>
        <end position="295"/>
    </location>
</feature>
<organism>
    <name type="scientific">Homo sapiens</name>
    <name type="common">Human</name>
    <dbReference type="NCBI Taxonomy" id="9606"/>
    <lineage>
        <taxon>Eukaryota</taxon>
        <taxon>Metazoa</taxon>
        <taxon>Chordata</taxon>
        <taxon>Craniata</taxon>
        <taxon>Vertebrata</taxon>
        <taxon>Euteleostomi</taxon>
        <taxon>Mammalia</taxon>
        <taxon>Eutheria</taxon>
        <taxon>Euarchontoglires</taxon>
        <taxon>Primates</taxon>
        <taxon>Haplorrhini</taxon>
        <taxon>Catarrhini</taxon>
        <taxon>Hominidae</taxon>
        <taxon>Homo</taxon>
    </lineage>
</organism>
<accession>Q9P015</accession>
<accession>Q96Q54</accession>
<accession>Q9H0Y1</accession>
<dbReference type="EMBL" id="AF161494">
    <property type="protein sequence ID" value="AAF29109.1"/>
    <property type="molecule type" value="mRNA"/>
</dbReference>
<dbReference type="EMBL" id="AL136665">
    <property type="protein sequence ID" value="CAB66600.1"/>
    <property type="molecule type" value="mRNA"/>
</dbReference>
<dbReference type="EMBL" id="CR533531">
    <property type="protein sequence ID" value="CAG38562.1"/>
    <property type="molecule type" value="mRNA"/>
</dbReference>
<dbReference type="EMBL" id="BC000891">
    <property type="protein sequence ID" value="AAH00891.1"/>
    <property type="molecule type" value="mRNA"/>
</dbReference>
<dbReference type="EMBL" id="AB051619">
    <property type="protein sequence ID" value="BAB54947.1"/>
    <property type="molecule type" value="Genomic_DNA"/>
</dbReference>
<dbReference type="CCDS" id="CCDS6158.1"/>
<dbReference type="RefSeq" id="NP_054894.1">
    <property type="nucleotide sequence ID" value="NM_014175.4"/>
</dbReference>
<dbReference type="PDB" id="3J7Y">
    <property type="method" value="EM"/>
    <property type="resolution" value="3.40 A"/>
    <property type="chains" value="M=1-296"/>
</dbReference>
<dbReference type="PDB" id="3J9M">
    <property type="method" value="EM"/>
    <property type="resolution" value="3.50 A"/>
    <property type="chains" value="M=1-296"/>
</dbReference>
<dbReference type="PDB" id="5OOL">
    <property type="method" value="EM"/>
    <property type="resolution" value="3.06 A"/>
    <property type="chains" value="M=1-296"/>
</dbReference>
<dbReference type="PDB" id="5OOM">
    <property type="method" value="EM"/>
    <property type="resolution" value="3.03 A"/>
    <property type="chains" value="M=1-296"/>
</dbReference>
<dbReference type="PDB" id="6I9R">
    <property type="method" value="EM"/>
    <property type="resolution" value="3.90 A"/>
    <property type="chains" value="M=1-296"/>
</dbReference>
<dbReference type="PDB" id="6NU2">
    <property type="method" value="EM"/>
    <property type="resolution" value="3.90 A"/>
    <property type="chains" value="M=10-296"/>
</dbReference>
<dbReference type="PDB" id="6NU3">
    <property type="method" value="EM"/>
    <property type="resolution" value="4.40 A"/>
    <property type="chains" value="M=1-296"/>
</dbReference>
<dbReference type="PDB" id="6VLZ">
    <property type="method" value="EM"/>
    <property type="resolution" value="2.97 A"/>
    <property type="chains" value="M=1-296"/>
</dbReference>
<dbReference type="PDB" id="6VMI">
    <property type="method" value="EM"/>
    <property type="resolution" value="2.96 A"/>
    <property type="chains" value="M=1-296"/>
</dbReference>
<dbReference type="PDB" id="6ZM5">
    <property type="method" value="EM"/>
    <property type="resolution" value="2.89 A"/>
    <property type="chains" value="M=1-296"/>
</dbReference>
<dbReference type="PDB" id="6ZM6">
    <property type="method" value="EM"/>
    <property type="resolution" value="2.59 A"/>
    <property type="chains" value="M=1-296"/>
</dbReference>
<dbReference type="PDB" id="6ZS9">
    <property type="method" value="EM"/>
    <property type="resolution" value="4.00 A"/>
    <property type="chains" value="XM=1-296"/>
</dbReference>
<dbReference type="PDB" id="6ZSA">
    <property type="method" value="EM"/>
    <property type="resolution" value="4.00 A"/>
    <property type="chains" value="XM=1-296"/>
</dbReference>
<dbReference type="PDB" id="6ZSB">
    <property type="method" value="EM"/>
    <property type="resolution" value="4.50 A"/>
    <property type="chains" value="XM=1-296"/>
</dbReference>
<dbReference type="PDB" id="6ZSC">
    <property type="method" value="EM"/>
    <property type="resolution" value="3.50 A"/>
    <property type="chains" value="XM=1-296"/>
</dbReference>
<dbReference type="PDB" id="6ZSD">
    <property type="method" value="EM"/>
    <property type="resolution" value="3.70 A"/>
    <property type="chains" value="XM=1-296"/>
</dbReference>
<dbReference type="PDB" id="6ZSE">
    <property type="method" value="EM"/>
    <property type="resolution" value="5.00 A"/>
    <property type="chains" value="XM=1-296"/>
</dbReference>
<dbReference type="PDB" id="6ZSG">
    <property type="method" value="EM"/>
    <property type="resolution" value="4.00 A"/>
    <property type="chains" value="XM=1-296"/>
</dbReference>
<dbReference type="PDB" id="7A5F">
    <property type="method" value="EM"/>
    <property type="resolution" value="4.40 A"/>
    <property type="chains" value="M3=1-296"/>
</dbReference>
<dbReference type="PDB" id="7A5G">
    <property type="method" value="EM"/>
    <property type="resolution" value="4.33 A"/>
    <property type="chains" value="M3=1-296"/>
</dbReference>
<dbReference type="PDB" id="7A5H">
    <property type="method" value="EM"/>
    <property type="resolution" value="3.30 A"/>
    <property type="chains" value="M=1-296"/>
</dbReference>
<dbReference type="PDB" id="7A5I">
    <property type="method" value="EM"/>
    <property type="resolution" value="3.70 A"/>
    <property type="chains" value="M3=1-296"/>
</dbReference>
<dbReference type="PDB" id="7A5J">
    <property type="method" value="EM"/>
    <property type="resolution" value="3.10 A"/>
    <property type="chains" value="M=1-296"/>
</dbReference>
<dbReference type="PDB" id="7A5K">
    <property type="method" value="EM"/>
    <property type="resolution" value="3.70 A"/>
    <property type="chains" value="M3=1-296"/>
</dbReference>
<dbReference type="PDB" id="7L08">
    <property type="method" value="EM"/>
    <property type="resolution" value="3.49 A"/>
    <property type="chains" value="M=1-296"/>
</dbReference>
<dbReference type="PDB" id="7L20">
    <property type="method" value="EM"/>
    <property type="resolution" value="3.15 A"/>
    <property type="chains" value="M=1-296"/>
</dbReference>
<dbReference type="PDB" id="7O9K">
    <property type="method" value="EM"/>
    <property type="resolution" value="3.10 A"/>
    <property type="chains" value="M=1-296"/>
</dbReference>
<dbReference type="PDB" id="7O9M">
    <property type="method" value="EM"/>
    <property type="resolution" value="2.50 A"/>
    <property type="chains" value="M=1-296"/>
</dbReference>
<dbReference type="PDB" id="7ODR">
    <property type="method" value="EM"/>
    <property type="resolution" value="2.90 A"/>
    <property type="chains" value="M=1-296"/>
</dbReference>
<dbReference type="PDB" id="7ODS">
    <property type="method" value="EM"/>
    <property type="resolution" value="3.10 A"/>
    <property type="chains" value="M=1-296"/>
</dbReference>
<dbReference type="PDB" id="7ODT">
    <property type="method" value="EM"/>
    <property type="resolution" value="3.10 A"/>
    <property type="chains" value="M=1-296"/>
</dbReference>
<dbReference type="PDB" id="7OF0">
    <property type="method" value="EM"/>
    <property type="resolution" value="2.20 A"/>
    <property type="chains" value="M=1-296"/>
</dbReference>
<dbReference type="PDB" id="7OF2">
    <property type="method" value="EM"/>
    <property type="resolution" value="2.70 A"/>
    <property type="chains" value="M=1-296"/>
</dbReference>
<dbReference type="PDB" id="7OF3">
    <property type="method" value="EM"/>
    <property type="resolution" value="2.70 A"/>
    <property type="chains" value="M=1-296"/>
</dbReference>
<dbReference type="PDB" id="7OF4">
    <property type="method" value="EM"/>
    <property type="resolution" value="2.70 A"/>
    <property type="chains" value="M=1-296"/>
</dbReference>
<dbReference type="PDB" id="7OF5">
    <property type="method" value="EM"/>
    <property type="resolution" value="2.90 A"/>
    <property type="chains" value="M=1-296"/>
</dbReference>
<dbReference type="PDB" id="7OF6">
    <property type="method" value="EM"/>
    <property type="resolution" value="2.60 A"/>
    <property type="chains" value="M=1-296"/>
</dbReference>
<dbReference type="PDB" id="7OF7">
    <property type="method" value="EM"/>
    <property type="resolution" value="2.50 A"/>
    <property type="chains" value="M=1-296"/>
</dbReference>
<dbReference type="PDB" id="7OG4">
    <property type="method" value="EM"/>
    <property type="resolution" value="3.80 A"/>
    <property type="chains" value="XM=1-296"/>
</dbReference>
<dbReference type="PDB" id="7OI6">
    <property type="method" value="EM"/>
    <property type="resolution" value="5.70 A"/>
    <property type="chains" value="M=1-296"/>
</dbReference>
<dbReference type="PDB" id="7OI7">
    <property type="method" value="EM"/>
    <property type="resolution" value="3.50 A"/>
    <property type="chains" value="M=1-296"/>
</dbReference>
<dbReference type="PDB" id="7OI8">
    <property type="method" value="EM"/>
    <property type="resolution" value="3.50 A"/>
    <property type="chains" value="M=1-296"/>
</dbReference>
<dbReference type="PDB" id="7OI9">
    <property type="method" value="EM"/>
    <property type="resolution" value="3.30 A"/>
    <property type="chains" value="M=1-296"/>
</dbReference>
<dbReference type="PDB" id="7OIA">
    <property type="method" value="EM"/>
    <property type="resolution" value="3.20 A"/>
    <property type="chains" value="M=1-296"/>
</dbReference>
<dbReference type="PDB" id="7OIB">
    <property type="method" value="EM"/>
    <property type="resolution" value="3.30 A"/>
    <property type="chains" value="M=1-296"/>
</dbReference>
<dbReference type="PDB" id="7OIC">
    <property type="method" value="EM"/>
    <property type="resolution" value="3.10 A"/>
    <property type="chains" value="M=1-296"/>
</dbReference>
<dbReference type="PDB" id="7OID">
    <property type="method" value="EM"/>
    <property type="resolution" value="3.70 A"/>
    <property type="chains" value="M=1-296"/>
</dbReference>
<dbReference type="PDB" id="7OIE">
    <property type="method" value="EM"/>
    <property type="resolution" value="3.50 A"/>
    <property type="chains" value="M=1-296"/>
</dbReference>
<dbReference type="PDB" id="7PD3">
    <property type="method" value="EM"/>
    <property type="resolution" value="3.40 A"/>
    <property type="chains" value="M=1-296"/>
</dbReference>
<dbReference type="PDB" id="7PO4">
    <property type="method" value="EM"/>
    <property type="resolution" value="2.56 A"/>
    <property type="chains" value="M=1-296"/>
</dbReference>
<dbReference type="PDB" id="7QH6">
    <property type="method" value="EM"/>
    <property type="resolution" value="3.08 A"/>
    <property type="chains" value="M=1-296"/>
</dbReference>
<dbReference type="PDB" id="7QH7">
    <property type="method" value="EM"/>
    <property type="resolution" value="2.89 A"/>
    <property type="chains" value="M=10-296"/>
</dbReference>
<dbReference type="PDB" id="7QI4">
    <property type="method" value="EM"/>
    <property type="resolution" value="2.21 A"/>
    <property type="chains" value="M=1-296"/>
</dbReference>
<dbReference type="PDB" id="7QI5">
    <property type="method" value="EM"/>
    <property type="resolution" value="2.63 A"/>
    <property type="chains" value="M=1-296"/>
</dbReference>
<dbReference type="PDB" id="7QI6">
    <property type="method" value="EM"/>
    <property type="resolution" value="2.98 A"/>
    <property type="chains" value="M=1-296"/>
</dbReference>
<dbReference type="PDB" id="8ANY">
    <property type="method" value="EM"/>
    <property type="resolution" value="2.85 A"/>
    <property type="chains" value="M=1-296"/>
</dbReference>
<dbReference type="PDB" id="8K2A">
    <property type="method" value="EM"/>
    <property type="resolution" value="2.90 A"/>
    <property type="chains" value="LO=1-296"/>
</dbReference>
<dbReference type="PDB" id="8K2B">
    <property type="method" value="EM"/>
    <property type="resolution" value="3.40 A"/>
    <property type="chains" value="LO=1-296"/>
</dbReference>
<dbReference type="PDB" id="8OIR">
    <property type="method" value="EM"/>
    <property type="resolution" value="3.10 A"/>
    <property type="chains" value="BT=1-296"/>
</dbReference>
<dbReference type="PDB" id="8OIT">
    <property type="method" value="EM"/>
    <property type="resolution" value="2.90 A"/>
    <property type="chains" value="BT=1-296"/>
</dbReference>
<dbReference type="PDB" id="8PK0">
    <property type="method" value="EM"/>
    <property type="resolution" value="3.03 A"/>
    <property type="chains" value="M=1-296"/>
</dbReference>
<dbReference type="PDB" id="8QSJ">
    <property type="method" value="EM"/>
    <property type="resolution" value="3.00 A"/>
    <property type="chains" value="M=1-296"/>
</dbReference>
<dbReference type="PDB" id="8QU1">
    <property type="method" value="EM"/>
    <property type="resolution" value="2.74 A"/>
    <property type="chains" value="M=1-296"/>
</dbReference>
<dbReference type="PDB" id="8QU5">
    <property type="method" value="EM"/>
    <property type="resolution" value="2.42 A"/>
    <property type="chains" value="M=1-296"/>
</dbReference>
<dbReference type="PDB" id="8RRI">
    <property type="method" value="EM"/>
    <property type="resolution" value="2.40 A"/>
    <property type="chains" value="M=1-296"/>
</dbReference>
<dbReference type="PDB" id="8XT0">
    <property type="method" value="EM"/>
    <property type="resolution" value="3.20 A"/>
    <property type="chains" value="LO=1-296"/>
</dbReference>
<dbReference type="PDB" id="8XT1">
    <property type="method" value="EM"/>
    <property type="resolution" value="3.10 A"/>
    <property type="chains" value="LO=1-296"/>
</dbReference>
<dbReference type="PDB" id="8XT2">
    <property type="method" value="EM"/>
    <property type="resolution" value="3.30 A"/>
    <property type="chains" value="LO=1-296"/>
</dbReference>
<dbReference type="PDB" id="8XT3">
    <property type="method" value="EM"/>
    <property type="resolution" value="3.10 A"/>
    <property type="chains" value="LO=1-296"/>
</dbReference>
<dbReference type="PDBsum" id="3J7Y"/>
<dbReference type="PDBsum" id="3J9M"/>
<dbReference type="PDBsum" id="5OOL"/>
<dbReference type="PDBsum" id="5OOM"/>
<dbReference type="PDBsum" id="6I9R"/>
<dbReference type="PDBsum" id="6NU2"/>
<dbReference type="PDBsum" id="6NU3"/>
<dbReference type="PDBsum" id="6VLZ"/>
<dbReference type="PDBsum" id="6VMI"/>
<dbReference type="PDBsum" id="6ZM5"/>
<dbReference type="PDBsum" id="6ZM6"/>
<dbReference type="PDBsum" id="6ZS9"/>
<dbReference type="PDBsum" id="6ZSA"/>
<dbReference type="PDBsum" id="6ZSB"/>
<dbReference type="PDBsum" id="6ZSC"/>
<dbReference type="PDBsum" id="6ZSD"/>
<dbReference type="PDBsum" id="6ZSE"/>
<dbReference type="PDBsum" id="6ZSG"/>
<dbReference type="PDBsum" id="7A5F"/>
<dbReference type="PDBsum" id="7A5G"/>
<dbReference type="PDBsum" id="7A5H"/>
<dbReference type="PDBsum" id="7A5I"/>
<dbReference type="PDBsum" id="7A5J"/>
<dbReference type="PDBsum" id="7A5K"/>
<dbReference type="PDBsum" id="7L08"/>
<dbReference type="PDBsum" id="7L20"/>
<dbReference type="PDBsum" id="7O9K"/>
<dbReference type="PDBsum" id="7O9M"/>
<dbReference type="PDBsum" id="7ODR"/>
<dbReference type="PDBsum" id="7ODS"/>
<dbReference type="PDBsum" id="7ODT"/>
<dbReference type="PDBsum" id="7OF0"/>
<dbReference type="PDBsum" id="7OF2"/>
<dbReference type="PDBsum" id="7OF3"/>
<dbReference type="PDBsum" id="7OF4"/>
<dbReference type="PDBsum" id="7OF5"/>
<dbReference type="PDBsum" id="7OF6"/>
<dbReference type="PDBsum" id="7OF7"/>
<dbReference type="PDBsum" id="7OG4"/>
<dbReference type="PDBsum" id="7OI6"/>
<dbReference type="PDBsum" id="7OI7"/>
<dbReference type="PDBsum" id="7OI8"/>
<dbReference type="PDBsum" id="7OI9"/>
<dbReference type="PDBsum" id="7OIA"/>
<dbReference type="PDBsum" id="7OIB"/>
<dbReference type="PDBsum" id="7OIC"/>
<dbReference type="PDBsum" id="7OID"/>
<dbReference type="PDBsum" id="7OIE"/>
<dbReference type="PDBsum" id="7PD3"/>
<dbReference type="PDBsum" id="7PO4"/>
<dbReference type="PDBsum" id="7QH6"/>
<dbReference type="PDBsum" id="7QH7"/>
<dbReference type="PDBsum" id="7QI4"/>
<dbReference type="PDBsum" id="7QI5"/>
<dbReference type="PDBsum" id="7QI6"/>
<dbReference type="PDBsum" id="8ANY"/>
<dbReference type="PDBsum" id="8K2A"/>
<dbReference type="PDBsum" id="8K2B"/>
<dbReference type="PDBsum" id="8OIR"/>
<dbReference type="PDBsum" id="8OIT"/>
<dbReference type="PDBsum" id="8PK0"/>
<dbReference type="PDBsum" id="8QSJ"/>
<dbReference type="PDBsum" id="8QU1"/>
<dbReference type="PDBsum" id="8QU5"/>
<dbReference type="PDBsum" id="8RRI"/>
<dbReference type="PDBsum" id="8XT0"/>
<dbReference type="PDBsum" id="8XT1"/>
<dbReference type="PDBsum" id="8XT2"/>
<dbReference type="PDBsum" id="8XT3"/>
<dbReference type="EMDB" id="EMD-0514"/>
<dbReference type="EMDB" id="EMD-0515"/>
<dbReference type="EMDB" id="EMD-11278"/>
<dbReference type="EMDB" id="EMD-11279"/>
<dbReference type="EMDB" id="EMD-11390"/>
<dbReference type="EMDB" id="EMD-11391"/>
<dbReference type="EMDB" id="EMD-11392"/>
<dbReference type="EMDB" id="EMD-11393"/>
<dbReference type="EMDB" id="EMD-11394"/>
<dbReference type="EMDB" id="EMD-11395"/>
<dbReference type="EMDB" id="EMD-11397"/>
<dbReference type="EMDB" id="EMD-11641"/>
<dbReference type="EMDB" id="EMD-11642"/>
<dbReference type="EMDB" id="EMD-11644"/>
<dbReference type="EMDB" id="EMD-12845"/>
<dbReference type="EMDB" id="EMD-12846"/>
<dbReference type="EMDB" id="EMD-12847"/>
<dbReference type="EMDB" id="EMD-12865"/>
<dbReference type="EMDB" id="EMD-12867"/>
<dbReference type="EMDB" id="EMD-12868"/>
<dbReference type="EMDB" id="EMD-12869"/>
<dbReference type="EMDB" id="EMD-12870"/>
<dbReference type="EMDB" id="EMD-12871"/>
<dbReference type="EMDB" id="EMD-12872"/>
<dbReference type="EMDB" id="EMD-12877"/>
<dbReference type="EMDB" id="EMD-12919"/>
<dbReference type="EMDB" id="EMD-12920"/>
<dbReference type="EMDB" id="EMD-12921"/>
<dbReference type="EMDB" id="EMD-12922"/>
<dbReference type="EMDB" id="EMD-12923"/>
<dbReference type="EMDB" id="EMD-12924"/>
<dbReference type="EMDB" id="EMD-12926"/>
<dbReference type="EMDB" id="EMD-12927"/>
<dbReference type="EMDB" id="EMD-13562"/>
<dbReference type="EMDB" id="EMD-13965"/>
<dbReference type="EMDB" id="EMD-13967"/>
<dbReference type="EMDB" id="EMD-13980"/>
<dbReference type="EMDB" id="EMD-13981"/>
<dbReference type="EMDB" id="EMD-13982"/>
<dbReference type="EMDB" id="EMD-15544"/>
<dbReference type="EMDB" id="EMD-16897"/>
<dbReference type="EMDB" id="EMD-16899"/>
<dbReference type="EMDB" id="EMD-17719"/>
<dbReference type="EMDB" id="EMD-19460"/>
<dbReference type="EMDB" id="EMD-21233"/>
<dbReference type="EMDB" id="EMD-21242"/>
<dbReference type="EMDB" id="EMD-23096"/>
<dbReference type="EMDB" id="EMD-23121"/>
<dbReference type="EMDB" id="EMD-36836"/>
<dbReference type="EMDB" id="EMD-36837"/>
<dbReference type="EMDB" id="EMD-38632"/>
<dbReference type="EMDB" id="EMD-38633"/>
<dbReference type="EMDB" id="EMD-38634"/>
<dbReference type="EMDB" id="EMD-38635"/>
<dbReference type="EMDB" id="EMD-4434"/>
<dbReference type="SMR" id="Q9P015"/>
<dbReference type="BioGRID" id="118857">
    <property type="interactions" value="218"/>
</dbReference>
<dbReference type="ComplexPortal" id="CPX-5226">
    <property type="entry name" value="39S mitochondrial large ribosomal subunit"/>
</dbReference>
<dbReference type="CORUM" id="Q9P015"/>
<dbReference type="FunCoup" id="Q9P015">
    <property type="interactions" value="2091"/>
</dbReference>
<dbReference type="IntAct" id="Q9P015">
    <property type="interactions" value="103"/>
</dbReference>
<dbReference type="MINT" id="Q9P015"/>
<dbReference type="STRING" id="9606.ENSP00000260102"/>
<dbReference type="GlyGen" id="Q9P015">
    <property type="glycosylation" value="1 site, 1 O-linked glycan (1 site)"/>
</dbReference>
<dbReference type="iPTMnet" id="Q9P015"/>
<dbReference type="PhosphoSitePlus" id="Q9P015"/>
<dbReference type="SwissPalm" id="Q9P015"/>
<dbReference type="BioMuta" id="MRPL15"/>
<dbReference type="DMDM" id="74734761"/>
<dbReference type="jPOST" id="Q9P015"/>
<dbReference type="MassIVE" id="Q9P015"/>
<dbReference type="PaxDb" id="9606-ENSP00000260102"/>
<dbReference type="PeptideAtlas" id="Q9P015"/>
<dbReference type="ProteomicsDB" id="83533"/>
<dbReference type="Pumba" id="Q9P015"/>
<dbReference type="Antibodypedia" id="24498">
    <property type="antibodies" value="183 antibodies from 25 providers"/>
</dbReference>
<dbReference type="DNASU" id="29088"/>
<dbReference type="Ensembl" id="ENST00000260102.9">
    <property type="protein sequence ID" value="ENSP00000260102.4"/>
    <property type="gene ID" value="ENSG00000137547.9"/>
</dbReference>
<dbReference type="GeneID" id="29088"/>
<dbReference type="KEGG" id="hsa:29088"/>
<dbReference type="MANE-Select" id="ENST00000260102.9">
    <property type="protein sequence ID" value="ENSP00000260102.4"/>
    <property type="RefSeq nucleotide sequence ID" value="NM_014175.4"/>
    <property type="RefSeq protein sequence ID" value="NP_054894.1"/>
</dbReference>
<dbReference type="UCSC" id="uc003xsa.3">
    <property type="organism name" value="human"/>
</dbReference>
<dbReference type="AGR" id="HGNC:14054"/>
<dbReference type="CTD" id="29088"/>
<dbReference type="DisGeNET" id="29088"/>
<dbReference type="GeneCards" id="MRPL15"/>
<dbReference type="HGNC" id="HGNC:14054">
    <property type="gene designation" value="MRPL15"/>
</dbReference>
<dbReference type="HPA" id="ENSG00000137547">
    <property type="expression patterns" value="Tissue enhanced (skeletal muscle, tongue)"/>
</dbReference>
<dbReference type="MIM" id="611828">
    <property type="type" value="gene"/>
</dbReference>
<dbReference type="neXtProt" id="NX_Q9P015"/>
<dbReference type="OpenTargets" id="ENSG00000137547"/>
<dbReference type="PharmGKB" id="PA30944"/>
<dbReference type="VEuPathDB" id="HostDB:ENSG00000137547"/>
<dbReference type="eggNOG" id="KOG0846">
    <property type="taxonomic scope" value="Eukaryota"/>
</dbReference>
<dbReference type="GeneTree" id="ENSGT00390000009040"/>
<dbReference type="InParanoid" id="Q9P015"/>
<dbReference type="OMA" id="EPGWLVN"/>
<dbReference type="OrthoDB" id="361383at2759"/>
<dbReference type="PAN-GO" id="Q9P015">
    <property type="GO annotations" value="2 GO annotations based on evolutionary models"/>
</dbReference>
<dbReference type="PhylomeDB" id="Q9P015"/>
<dbReference type="TreeFam" id="TF105918"/>
<dbReference type="PathwayCommons" id="Q9P015"/>
<dbReference type="Reactome" id="R-HSA-5368286">
    <property type="pathway name" value="Mitochondrial translation initiation"/>
</dbReference>
<dbReference type="Reactome" id="R-HSA-5389840">
    <property type="pathway name" value="Mitochondrial translation elongation"/>
</dbReference>
<dbReference type="Reactome" id="R-HSA-5419276">
    <property type="pathway name" value="Mitochondrial translation termination"/>
</dbReference>
<dbReference type="SignaLink" id="Q9P015"/>
<dbReference type="SIGNOR" id="Q9P015"/>
<dbReference type="BioGRID-ORCS" id="29088">
    <property type="hits" value="364 hits in 1161 CRISPR screens"/>
</dbReference>
<dbReference type="ChiTaRS" id="MRPL15">
    <property type="organism name" value="human"/>
</dbReference>
<dbReference type="EvolutionaryTrace" id="Q9P015"/>
<dbReference type="GeneWiki" id="MRPL15"/>
<dbReference type="GenomeRNAi" id="29088"/>
<dbReference type="Pharos" id="Q9P015">
    <property type="development level" value="Tdark"/>
</dbReference>
<dbReference type="PRO" id="PR:Q9P015"/>
<dbReference type="Proteomes" id="UP000005640">
    <property type="component" value="Chromosome 8"/>
</dbReference>
<dbReference type="RNAct" id="Q9P015">
    <property type="molecule type" value="protein"/>
</dbReference>
<dbReference type="Bgee" id="ENSG00000137547">
    <property type="expression patterns" value="Expressed in heart right ventricle and 204 other cell types or tissues"/>
</dbReference>
<dbReference type="ExpressionAtlas" id="Q9P015">
    <property type="expression patterns" value="baseline and differential"/>
</dbReference>
<dbReference type="GO" id="GO:0005743">
    <property type="term" value="C:mitochondrial inner membrane"/>
    <property type="evidence" value="ECO:0000304"/>
    <property type="project" value="Reactome"/>
</dbReference>
<dbReference type="GO" id="GO:0005762">
    <property type="term" value="C:mitochondrial large ribosomal subunit"/>
    <property type="evidence" value="ECO:0000314"/>
    <property type="project" value="UniProtKB"/>
</dbReference>
<dbReference type="GO" id="GO:0005739">
    <property type="term" value="C:mitochondrion"/>
    <property type="evidence" value="ECO:0000314"/>
    <property type="project" value="UniProtKB"/>
</dbReference>
<dbReference type="GO" id="GO:0003723">
    <property type="term" value="F:RNA binding"/>
    <property type="evidence" value="ECO:0007005"/>
    <property type="project" value="UniProtKB"/>
</dbReference>
<dbReference type="GO" id="GO:0003735">
    <property type="term" value="F:structural constituent of ribosome"/>
    <property type="evidence" value="ECO:0000318"/>
    <property type="project" value="GO_Central"/>
</dbReference>
<dbReference type="GO" id="GO:1990830">
    <property type="term" value="P:cellular response to leukemia inhibitory factor"/>
    <property type="evidence" value="ECO:0007669"/>
    <property type="project" value="Ensembl"/>
</dbReference>
<dbReference type="GO" id="GO:0032543">
    <property type="term" value="P:mitochondrial translation"/>
    <property type="evidence" value="ECO:0000303"/>
    <property type="project" value="ComplexPortal"/>
</dbReference>
<dbReference type="FunFam" id="3.100.10.10:FF:000006">
    <property type="entry name" value="39S ribosomal protein L15, mitochondrial"/>
    <property type="match status" value="1"/>
</dbReference>
<dbReference type="Gene3D" id="3.100.10.10">
    <property type="match status" value="1"/>
</dbReference>
<dbReference type="HAMAP" id="MF_01341">
    <property type="entry name" value="Ribosomal_uL15"/>
    <property type="match status" value="1"/>
</dbReference>
<dbReference type="InterPro" id="IPR030878">
    <property type="entry name" value="Ribosomal_uL15"/>
</dbReference>
<dbReference type="InterPro" id="IPR021131">
    <property type="entry name" value="Ribosomal_uL15/eL18"/>
</dbReference>
<dbReference type="InterPro" id="IPR036227">
    <property type="entry name" value="Ribosomal_uL15/eL18_sf"/>
</dbReference>
<dbReference type="InterPro" id="IPR005749">
    <property type="entry name" value="Ribosomal_uL15_bac-type"/>
</dbReference>
<dbReference type="PANTHER" id="PTHR12934">
    <property type="entry name" value="50S RIBOSOMAL PROTEIN L15"/>
    <property type="match status" value="1"/>
</dbReference>
<dbReference type="PANTHER" id="PTHR12934:SF11">
    <property type="entry name" value="LARGE RIBOSOMAL SUBUNIT PROTEIN UL15M"/>
    <property type="match status" value="1"/>
</dbReference>
<dbReference type="Pfam" id="PF00828">
    <property type="entry name" value="Ribosomal_L27A"/>
    <property type="match status" value="1"/>
</dbReference>
<dbReference type="SUPFAM" id="SSF52080">
    <property type="entry name" value="Ribosomal proteins L15p and L18e"/>
    <property type="match status" value="1"/>
</dbReference>
<proteinExistence type="evidence at protein level"/>